<reference key="1">
    <citation type="journal article" date="2002" name="Nature">
        <title>Modulation of virulence within a pathogenicity island in vancomycin-resistant Enterococcus faecalis.</title>
        <authorList>
            <person name="Shankar N."/>
            <person name="Baghdayan A.S."/>
            <person name="Gilmore M.S."/>
        </authorList>
    </citation>
    <scope>NUCLEOTIDE SEQUENCE [GENOMIC DNA]</scope>
</reference>
<reference key="2">
    <citation type="journal article" date="2003" name="Science">
        <title>Role of mobile DNA in the evolution of vancomycin-resistant Enterococcus faecalis.</title>
        <authorList>
            <person name="Paulsen I.T."/>
            <person name="Banerjei L."/>
            <person name="Myers G.S.A."/>
            <person name="Nelson K.E."/>
            <person name="Seshadri R."/>
            <person name="Read T.D."/>
            <person name="Fouts D.E."/>
            <person name="Eisen J.A."/>
            <person name="Gill S.R."/>
            <person name="Heidelberg J.F."/>
            <person name="Tettelin H."/>
            <person name="Dodson R.J."/>
            <person name="Umayam L.A."/>
            <person name="Brinkac L.M."/>
            <person name="Beanan M.J."/>
            <person name="Daugherty S.C."/>
            <person name="DeBoy R.T."/>
            <person name="Durkin S.A."/>
            <person name="Kolonay J.F."/>
            <person name="Madupu R."/>
            <person name="Nelson W.C."/>
            <person name="Vamathevan J.J."/>
            <person name="Tran B."/>
            <person name="Upton J."/>
            <person name="Hansen T."/>
            <person name="Shetty J."/>
            <person name="Khouri H.M."/>
            <person name="Utterback T.R."/>
            <person name="Radune D."/>
            <person name="Ketchum K.A."/>
            <person name="Dougherty B.A."/>
            <person name="Fraser C.M."/>
        </authorList>
    </citation>
    <scope>NUCLEOTIDE SEQUENCE [LARGE SCALE GENOMIC DNA]</scope>
    <source>
        <strain>ATCC 700802 / V583</strain>
    </source>
</reference>
<proteinExistence type="inferred from homology"/>
<protein>
    <recommendedName>
        <fullName evidence="1">Xylose isomerase</fullName>
        <ecNumber evidence="1">5.3.1.5</ecNumber>
    </recommendedName>
</protein>
<keyword id="KW-0119">Carbohydrate metabolism</keyword>
<keyword id="KW-0963">Cytoplasm</keyword>
<keyword id="KW-0413">Isomerase</keyword>
<keyword id="KW-0460">Magnesium</keyword>
<keyword id="KW-0479">Metal-binding</keyword>
<keyword id="KW-1185">Reference proteome</keyword>
<keyword id="KW-0859">Xylose metabolism</keyword>
<organism>
    <name type="scientific">Enterococcus faecalis (strain ATCC 700802 / V583)</name>
    <dbReference type="NCBI Taxonomy" id="226185"/>
    <lineage>
        <taxon>Bacteria</taxon>
        <taxon>Bacillati</taxon>
        <taxon>Bacillota</taxon>
        <taxon>Bacilli</taxon>
        <taxon>Lactobacillales</taxon>
        <taxon>Enterococcaceae</taxon>
        <taxon>Enterococcus</taxon>
    </lineage>
</organism>
<sequence>MVYFPKIEKIKYEGTNTKNMYAFRHYNSEEIIMGKTMKEHLRFAVAYWHTMTQDGSDPFGKAVNKRSWLGESPMETAKKRVIAFFEILEKLDVEYFCFHDIDIAPEGNSLKEFFSNIDEITDLIKEKMDETGIKLLWNTANMFSNPRYVNGAASTNNANVYAIAAAQVKKGLDVSKKLGGENYVFWGGREGYETLLNTDMKFEQDNIARLFKMAIFYGEKIGHKPQFLIEPKPKEPSKHQYDFDAATTMAFILKYGLEKDFKLNLEANHATLAGHTFEHELNVARNYGALGSIDANQGDVLLGWDTDEFPTNVYDVTLAMYEILENGGIEPGGINFDSKVRRSSFEMEDLLLAHIAGMDTFARGLKSAMKLKEDRFFEDLKEQRYSSFKKGIGAKIISGKENLESLTNYALKNDEPIIESSHIEYVKNILNDYLY</sequence>
<evidence type="ECO:0000255" key="1">
    <source>
        <dbReference type="HAMAP-Rule" id="MF_00455"/>
    </source>
</evidence>
<comment type="catalytic activity">
    <reaction evidence="1">
        <text>alpha-D-xylose = alpha-D-xylulofuranose</text>
        <dbReference type="Rhea" id="RHEA:22816"/>
        <dbReference type="ChEBI" id="CHEBI:28518"/>
        <dbReference type="ChEBI" id="CHEBI:188998"/>
        <dbReference type="EC" id="5.3.1.5"/>
    </reaction>
</comment>
<comment type="cofactor">
    <cofactor evidence="1">
        <name>Mg(2+)</name>
        <dbReference type="ChEBI" id="CHEBI:18420"/>
    </cofactor>
    <text evidence="1">Binds 2 magnesium ions per subunit.</text>
</comment>
<comment type="subunit">
    <text evidence="1">Homotetramer.</text>
</comment>
<comment type="subcellular location">
    <subcellularLocation>
        <location evidence="1">Cytoplasm</location>
    </subcellularLocation>
</comment>
<comment type="similarity">
    <text evidence="1">Belongs to the xylose isomerase family.</text>
</comment>
<name>XYLA_ENTFA</name>
<dbReference type="EC" id="5.3.1.5" evidence="1"/>
<dbReference type="EMBL" id="AF454824">
    <property type="protein sequence ID" value="AAM75286.1"/>
    <property type="molecule type" value="Genomic_DNA"/>
</dbReference>
<dbReference type="EMBL" id="AE016830">
    <property type="protein sequence ID" value="AAO80397.1"/>
    <property type="molecule type" value="Genomic_DNA"/>
</dbReference>
<dbReference type="RefSeq" id="NP_814326.1">
    <property type="nucleotide sequence ID" value="NC_004668.1"/>
</dbReference>
<dbReference type="RefSeq" id="WP_010774172.1">
    <property type="nucleotide sequence ID" value="NZ_KE136527.1"/>
</dbReference>
<dbReference type="SMR" id="Q7C3R3"/>
<dbReference type="STRING" id="226185.EF_0556"/>
<dbReference type="EnsemblBacteria" id="AAO80397">
    <property type="protein sequence ID" value="AAO80397"/>
    <property type="gene ID" value="EF_0556"/>
</dbReference>
<dbReference type="KEGG" id="efa:EF0556"/>
<dbReference type="PATRIC" id="fig|226185.45.peg.2497"/>
<dbReference type="eggNOG" id="COG2115">
    <property type="taxonomic scope" value="Bacteria"/>
</dbReference>
<dbReference type="HOGENOM" id="CLU_037261_1_0_9"/>
<dbReference type="Proteomes" id="UP000001415">
    <property type="component" value="Chromosome"/>
</dbReference>
<dbReference type="GO" id="GO:0005737">
    <property type="term" value="C:cytoplasm"/>
    <property type="evidence" value="ECO:0007669"/>
    <property type="project" value="UniProtKB-SubCell"/>
</dbReference>
<dbReference type="GO" id="GO:0000287">
    <property type="term" value="F:magnesium ion binding"/>
    <property type="evidence" value="ECO:0007669"/>
    <property type="project" value="UniProtKB-UniRule"/>
</dbReference>
<dbReference type="GO" id="GO:0009045">
    <property type="term" value="F:xylose isomerase activity"/>
    <property type="evidence" value="ECO:0007669"/>
    <property type="project" value="UniProtKB-UniRule"/>
</dbReference>
<dbReference type="GO" id="GO:0042732">
    <property type="term" value="P:D-xylose metabolic process"/>
    <property type="evidence" value="ECO:0007669"/>
    <property type="project" value="UniProtKB-UniRule"/>
</dbReference>
<dbReference type="Gene3D" id="3.20.20.150">
    <property type="entry name" value="Divalent-metal-dependent TIM barrel enzymes"/>
    <property type="match status" value="1"/>
</dbReference>
<dbReference type="HAMAP" id="MF_00455">
    <property type="entry name" value="Xylose_isom_A"/>
    <property type="match status" value="1"/>
</dbReference>
<dbReference type="InterPro" id="IPR036237">
    <property type="entry name" value="Xyl_isomerase-like_sf"/>
</dbReference>
<dbReference type="InterPro" id="IPR013452">
    <property type="entry name" value="Xylose_isom_bac"/>
</dbReference>
<dbReference type="InterPro" id="IPR001998">
    <property type="entry name" value="Xylose_isomerase"/>
</dbReference>
<dbReference type="NCBIfam" id="NF003998">
    <property type="entry name" value="PRK05474.1"/>
    <property type="match status" value="1"/>
</dbReference>
<dbReference type="NCBIfam" id="TIGR02630">
    <property type="entry name" value="xylose_isom_A"/>
    <property type="match status" value="1"/>
</dbReference>
<dbReference type="PANTHER" id="PTHR48408">
    <property type="match status" value="1"/>
</dbReference>
<dbReference type="PANTHER" id="PTHR48408:SF1">
    <property type="entry name" value="XYLOSE ISOMERASE"/>
    <property type="match status" value="1"/>
</dbReference>
<dbReference type="PRINTS" id="PR00688">
    <property type="entry name" value="XYLOSISMRASE"/>
</dbReference>
<dbReference type="SUPFAM" id="SSF51658">
    <property type="entry name" value="Xylose isomerase-like"/>
    <property type="match status" value="1"/>
</dbReference>
<dbReference type="PROSITE" id="PS51415">
    <property type="entry name" value="XYLOSE_ISOMERASE"/>
    <property type="match status" value="1"/>
</dbReference>
<gene>
    <name evidence="1" type="primary">xylA</name>
    <name type="ordered locus">EF_0556</name>
    <name type="ORF">ef-0082</name>
</gene>
<feature type="chain" id="PRO_0000195777" description="Xylose isomerase">
    <location>
        <begin position="1"/>
        <end position="435"/>
    </location>
</feature>
<feature type="active site" evidence="1">
    <location>
        <position position="99"/>
    </location>
</feature>
<feature type="active site" evidence="1">
    <location>
        <position position="102"/>
    </location>
</feature>
<feature type="binding site" evidence="1">
    <location>
        <position position="230"/>
    </location>
    <ligand>
        <name>Mg(2+)</name>
        <dbReference type="ChEBI" id="CHEBI:18420"/>
        <label>1</label>
    </ligand>
</feature>
<feature type="binding site" evidence="1">
    <location>
        <position position="266"/>
    </location>
    <ligand>
        <name>Mg(2+)</name>
        <dbReference type="ChEBI" id="CHEBI:18420"/>
        <label>1</label>
    </ligand>
</feature>
<feature type="binding site" evidence="1">
    <location>
        <position position="266"/>
    </location>
    <ligand>
        <name>Mg(2+)</name>
        <dbReference type="ChEBI" id="CHEBI:18420"/>
        <label>2</label>
    </ligand>
</feature>
<feature type="binding site" evidence="1">
    <location>
        <position position="269"/>
    </location>
    <ligand>
        <name>Mg(2+)</name>
        <dbReference type="ChEBI" id="CHEBI:18420"/>
        <label>2</label>
    </ligand>
</feature>
<feature type="binding site" evidence="1">
    <location>
        <position position="294"/>
    </location>
    <ligand>
        <name>Mg(2+)</name>
        <dbReference type="ChEBI" id="CHEBI:18420"/>
        <label>1</label>
    </ligand>
</feature>
<feature type="binding site" evidence="1">
    <location>
        <position position="305"/>
    </location>
    <ligand>
        <name>Mg(2+)</name>
        <dbReference type="ChEBI" id="CHEBI:18420"/>
        <label>2</label>
    </ligand>
</feature>
<feature type="binding site" evidence="1">
    <location>
        <position position="307"/>
    </location>
    <ligand>
        <name>Mg(2+)</name>
        <dbReference type="ChEBI" id="CHEBI:18420"/>
        <label>2</label>
    </ligand>
</feature>
<feature type="binding site" evidence="1">
    <location>
        <position position="337"/>
    </location>
    <ligand>
        <name>Mg(2+)</name>
        <dbReference type="ChEBI" id="CHEBI:18420"/>
        <label>1</label>
    </ligand>
</feature>
<accession>Q7C3R3</accession>
<accession>Q8KU78</accession>